<keyword id="KW-0997">Cell inner membrane</keyword>
<keyword id="KW-1003">Cell membrane</keyword>
<keyword id="KW-0472">Membrane</keyword>
<keyword id="KW-0653">Protein transport</keyword>
<keyword id="KW-1185">Reference proteome</keyword>
<keyword id="KW-0811">Translocation</keyword>
<keyword id="KW-0812">Transmembrane</keyword>
<keyword id="KW-1133">Transmembrane helix</keyword>
<keyword id="KW-0813">Transport</keyword>
<dbReference type="EMBL" id="CP000148">
    <property type="protein sequence ID" value="ABB33430.1"/>
    <property type="molecule type" value="Genomic_DNA"/>
</dbReference>
<dbReference type="RefSeq" id="WP_004512655.1">
    <property type="nucleotide sequence ID" value="NC_007517.1"/>
</dbReference>
<dbReference type="SMR" id="Q39QP4"/>
<dbReference type="STRING" id="269799.Gmet_3217"/>
<dbReference type="KEGG" id="gme:Gmet_3217"/>
<dbReference type="eggNOG" id="COG1826">
    <property type="taxonomic scope" value="Bacteria"/>
</dbReference>
<dbReference type="HOGENOM" id="CLU_086034_6_0_7"/>
<dbReference type="Proteomes" id="UP000007073">
    <property type="component" value="Chromosome"/>
</dbReference>
<dbReference type="GO" id="GO:0033281">
    <property type="term" value="C:TAT protein transport complex"/>
    <property type="evidence" value="ECO:0007669"/>
    <property type="project" value="UniProtKB-UniRule"/>
</dbReference>
<dbReference type="GO" id="GO:0008320">
    <property type="term" value="F:protein transmembrane transporter activity"/>
    <property type="evidence" value="ECO:0007669"/>
    <property type="project" value="UniProtKB-UniRule"/>
</dbReference>
<dbReference type="GO" id="GO:0043953">
    <property type="term" value="P:protein transport by the Tat complex"/>
    <property type="evidence" value="ECO:0007669"/>
    <property type="project" value="UniProtKB-UniRule"/>
</dbReference>
<dbReference type="Gene3D" id="1.20.5.3310">
    <property type="match status" value="1"/>
</dbReference>
<dbReference type="HAMAP" id="MF_00236">
    <property type="entry name" value="TatA_E"/>
    <property type="match status" value="1"/>
</dbReference>
<dbReference type="InterPro" id="IPR003369">
    <property type="entry name" value="TatA/B/E"/>
</dbReference>
<dbReference type="InterPro" id="IPR006312">
    <property type="entry name" value="TatA/E"/>
</dbReference>
<dbReference type="NCBIfam" id="NF011430">
    <property type="entry name" value="PRK14861.1"/>
    <property type="match status" value="1"/>
</dbReference>
<dbReference type="NCBIfam" id="TIGR01411">
    <property type="entry name" value="tatAE"/>
    <property type="match status" value="1"/>
</dbReference>
<dbReference type="PANTHER" id="PTHR42982">
    <property type="entry name" value="SEC-INDEPENDENT PROTEIN TRANSLOCASE PROTEIN TATA"/>
    <property type="match status" value="1"/>
</dbReference>
<dbReference type="PANTHER" id="PTHR42982:SF1">
    <property type="entry name" value="SEC-INDEPENDENT PROTEIN TRANSLOCASE PROTEIN TATA"/>
    <property type="match status" value="1"/>
</dbReference>
<dbReference type="Pfam" id="PF02416">
    <property type="entry name" value="TatA_B_E"/>
    <property type="match status" value="1"/>
</dbReference>
<dbReference type="PRINTS" id="PR01506">
    <property type="entry name" value="TATBPROTEIN"/>
</dbReference>
<proteinExistence type="inferred from homology"/>
<name>TATA_GEOMG</name>
<reference key="1">
    <citation type="journal article" date="2009" name="BMC Microbiol.">
        <title>The genome sequence of Geobacter metallireducens: features of metabolism, physiology and regulation common and dissimilar to Geobacter sulfurreducens.</title>
        <authorList>
            <person name="Aklujkar M."/>
            <person name="Krushkal J."/>
            <person name="DiBartolo G."/>
            <person name="Lapidus A."/>
            <person name="Land M.L."/>
            <person name="Lovley D.R."/>
        </authorList>
    </citation>
    <scope>NUCLEOTIDE SEQUENCE [LARGE SCALE GENOMIC DNA]</scope>
    <source>
        <strain>ATCC 53774 / DSM 7210 / GS-15</strain>
    </source>
</reference>
<gene>
    <name evidence="1" type="primary">tatA</name>
    <name type="ordered locus">Gmet_3217</name>
</gene>
<evidence type="ECO:0000255" key="1">
    <source>
        <dbReference type="HAMAP-Rule" id="MF_00236"/>
    </source>
</evidence>
<sequence>MFGIGMPELIVILVIVLVVFGAGRLPEIGGALGKSIRNFKKASDGKDEIEIKPEKKDDPSK</sequence>
<feature type="chain" id="PRO_1000044388" description="Sec-independent protein translocase protein TatA">
    <location>
        <begin position="1"/>
        <end position="61"/>
    </location>
</feature>
<feature type="transmembrane region" description="Helical" evidence="1">
    <location>
        <begin position="1"/>
        <end position="21"/>
    </location>
</feature>
<comment type="function">
    <text evidence="1">Part of the twin-arginine translocation (Tat) system that transports large folded proteins containing a characteristic twin-arginine motif in their signal peptide across membranes. TatA could form the protein-conducting channel of the Tat system.</text>
</comment>
<comment type="subunit">
    <text evidence="1">The Tat system comprises two distinct complexes: a TatABC complex, containing multiple copies of TatA, TatB and TatC subunits, and a separate TatA complex, containing only TatA subunits. Substrates initially bind to the TatABC complex, which probably triggers association of the separate TatA complex to form the active translocon.</text>
</comment>
<comment type="subcellular location">
    <subcellularLocation>
        <location evidence="1">Cell inner membrane</location>
        <topology evidence="1">Single-pass membrane protein</topology>
    </subcellularLocation>
</comment>
<comment type="similarity">
    <text evidence="1">Belongs to the TatA/E family.</text>
</comment>
<organism>
    <name type="scientific">Geobacter metallireducens (strain ATCC 53774 / DSM 7210 / GS-15)</name>
    <dbReference type="NCBI Taxonomy" id="269799"/>
    <lineage>
        <taxon>Bacteria</taxon>
        <taxon>Pseudomonadati</taxon>
        <taxon>Thermodesulfobacteriota</taxon>
        <taxon>Desulfuromonadia</taxon>
        <taxon>Geobacterales</taxon>
        <taxon>Geobacteraceae</taxon>
        <taxon>Geobacter</taxon>
    </lineage>
</organism>
<protein>
    <recommendedName>
        <fullName evidence="1">Sec-independent protein translocase protein TatA</fullName>
    </recommendedName>
</protein>
<accession>Q39QP4</accession>